<proteinExistence type="inferred from homology"/>
<reference key="1">
    <citation type="journal article" date="2003" name="Proc. Natl. Acad. Sci. U.S.A.">
        <title>The complete genome sequence of Mycobacterium bovis.</title>
        <authorList>
            <person name="Garnier T."/>
            <person name="Eiglmeier K."/>
            <person name="Camus J.-C."/>
            <person name="Medina N."/>
            <person name="Mansoor H."/>
            <person name="Pryor M."/>
            <person name="Duthoy S."/>
            <person name="Grondin S."/>
            <person name="Lacroix C."/>
            <person name="Monsempe C."/>
            <person name="Simon S."/>
            <person name="Harris B."/>
            <person name="Atkin R."/>
            <person name="Doggett J."/>
            <person name="Mayes R."/>
            <person name="Keating L."/>
            <person name="Wheeler P.R."/>
            <person name="Parkhill J."/>
            <person name="Barrell B.G."/>
            <person name="Cole S.T."/>
            <person name="Gordon S.V."/>
            <person name="Hewinson R.G."/>
        </authorList>
    </citation>
    <scope>NUCLEOTIDE SEQUENCE [LARGE SCALE GENOMIC DNA]</scope>
    <source>
        <strain>ATCC BAA-935 / AF2122/97</strain>
    </source>
</reference>
<reference key="2">
    <citation type="journal article" date="2017" name="Genome Announc.">
        <title>Updated reference genome sequence and annotation of Mycobacterium bovis AF2122/97.</title>
        <authorList>
            <person name="Malone K.M."/>
            <person name="Farrell D."/>
            <person name="Stuber T.P."/>
            <person name="Schubert O.T."/>
            <person name="Aebersold R."/>
            <person name="Robbe-Austerman S."/>
            <person name="Gordon S.V."/>
        </authorList>
    </citation>
    <scope>NUCLEOTIDE SEQUENCE [LARGE SCALE GENOMIC DNA]</scope>
    <scope>GENOME REANNOTATION</scope>
    <source>
        <strain>ATCC BAA-935 / AF2122/97</strain>
    </source>
</reference>
<reference key="3">
    <citation type="submission" date="1996-10" db="EMBL/GenBank/DDBJ databases">
        <authorList>
            <person name="Qin M."/>
            <person name="Zachariah S."/>
            <person name="Madiraju M.V.V.S."/>
            <person name="Rajagopalan M."/>
        </authorList>
    </citation>
    <scope>NUCLEOTIDE SEQUENCE [GENOMIC DNA] OF 1-58</scope>
    <source>
        <strain>BCG</strain>
    </source>
</reference>
<feature type="chain" id="PRO_0000105443" description="Beta sliding clamp">
    <location>
        <begin position="1"/>
        <end position="402"/>
    </location>
</feature>
<accession>O33914</accession>
<accession>A0A1R3XU10</accession>
<accession>X2BDQ9</accession>
<dbReference type="EMBL" id="LT708304">
    <property type="protein sequence ID" value="SIT98337.1"/>
    <property type="molecule type" value="Genomic_DNA"/>
</dbReference>
<dbReference type="EMBL" id="U75298">
    <property type="protein sequence ID" value="AAB81129.1"/>
    <property type="molecule type" value="Genomic_DNA"/>
</dbReference>
<dbReference type="RefSeq" id="NP_853672.1">
    <property type="nucleotide sequence ID" value="NC_002945.3"/>
</dbReference>
<dbReference type="RefSeq" id="WP_010950321.1">
    <property type="nucleotide sequence ID" value="NC_002945.4"/>
</dbReference>
<dbReference type="SMR" id="O33914"/>
<dbReference type="KEGG" id="mbo:BQ2027_MB0002"/>
<dbReference type="PATRIC" id="fig|233413.5.peg.2"/>
<dbReference type="Proteomes" id="UP000001419">
    <property type="component" value="Chromosome"/>
</dbReference>
<dbReference type="GO" id="GO:0005737">
    <property type="term" value="C:cytoplasm"/>
    <property type="evidence" value="ECO:0007669"/>
    <property type="project" value="UniProtKB-SubCell"/>
</dbReference>
<dbReference type="GO" id="GO:0009360">
    <property type="term" value="C:DNA polymerase III complex"/>
    <property type="evidence" value="ECO:0007669"/>
    <property type="project" value="InterPro"/>
</dbReference>
<dbReference type="GO" id="GO:0008408">
    <property type="term" value="F:3'-5' exonuclease activity"/>
    <property type="evidence" value="ECO:0007669"/>
    <property type="project" value="InterPro"/>
</dbReference>
<dbReference type="GO" id="GO:0003677">
    <property type="term" value="F:DNA binding"/>
    <property type="evidence" value="ECO:0007669"/>
    <property type="project" value="UniProtKB-KW"/>
</dbReference>
<dbReference type="GO" id="GO:0003887">
    <property type="term" value="F:DNA-directed DNA polymerase activity"/>
    <property type="evidence" value="ECO:0007669"/>
    <property type="project" value="UniProtKB-KW"/>
</dbReference>
<dbReference type="GO" id="GO:0006271">
    <property type="term" value="P:DNA strand elongation involved in DNA replication"/>
    <property type="evidence" value="ECO:0007669"/>
    <property type="project" value="TreeGrafter"/>
</dbReference>
<dbReference type="CDD" id="cd00140">
    <property type="entry name" value="beta_clamp"/>
    <property type="match status" value="1"/>
</dbReference>
<dbReference type="FunFam" id="3.10.150.10:FF:000001">
    <property type="entry name" value="Beta sliding clamp"/>
    <property type="match status" value="1"/>
</dbReference>
<dbReference type="FunFam" id="3.10.150.10:FF:000005">
    <property type="entry name" value="Beta sliding clamp"/>
    <property type="match status" value="1"/>
</dbReference>
<dbReference type="Gene3D" id="3.10.150.10">
    <property type="entry name" value="DNA Polymerase III, subunit A, domain 2"/>
    <property type="match status" value="3"/>
</dbReference>
<dbReference type="InterPro" id="IPR046938">
    <property type="entry name" value="DNA_clamp_sf"/>
</dbReference>
<dbReference type="InterPro" id="IPR001001">
    <property type="entry name" value="DNA_polIII_beta"/>
</dbReference>
<dbReference type="InterPro" id="IPR022635">
    <property type="entry name" value="DNA_polIII_beta_C"/>
</dbReference>
<dbReference type="InterPro" id="IPR022637">
    <property type="entry name" value="DNA_polIII_beta_cen"/>
</dbReference>
<dbReference type="InterPro" id="IPR022634">
    <property type="entry name" value="DNA_polIII_beta_N"/>
</dbReference>
<dbReference type="NCBIfam" id="TIGR00663">
    <property type="entry name" value="dnan"/>
    <property type="match status" value="1"/>
</dbReference>
<dbReference type="PANTHER" id="PTHR30478:SF0">
    <property type="entry name" value="BETA SLIDING CLAMP"/>
    <property type="match status" value="1"/>
</dbReference>
<dbReference type="PANTHER" id="PTHR30478">
    <property type="entry name" value="DNA POLYMERASE III SUBUNIT BETA"/>
    <property type="match status" value="1"/>
</dbReference>
<dbReference type="Pfam" id="PF00712">
    <property type="entry name" value="DNA_pol3_beta"/>
    <property type="match status" value="1"/>
</dbReference>
<dbReference type="Pfam" id="PF02767">
    <property type="entry name" value="DNA_pol3_beta_2"/>
    <property type="match status" value="1"/>
</dbReference>
<dbReference type="Pfam" id="PF02768">
    <property type="entry name" value="DNA_pol3_beta_3"/>
    <property type="match status" value="1"/>
</dbReference>
<dbReference type="PIRSF" id="PIRSF000804">
    <property type="entry name" value="DNA_pol_III_b"/>
    <property type="match status" value="1"/>
</dbReference>
<dbReference type="SMART" id="SM00480">
    <property type="entry name" value="POL3Bc"/>
    <property type="match status" value="1"/>
</dbReference>
<dbReference type="SUPFAM" id="SSF55979">
    <property type="entry name" value="DNA clamp"/>
    <property type="match status" value="3"/>
</dbReference>
<organism>
    <name type="scientific">Mycobacterium bovis (strain ATCC BAA-935 / AF2122/97)</name>
    <dbReference type="NCBI Taxonomy" id="233413"/>
    <lineage>
        <taxon>Bacteria</taxon>
        <taxon>Bacillati</taxon>
        <taxon>Actinomycetota</taxon>
        <taxon>Actinomycetes</taxon>
        <taxon>Mycobacteriales</taxon>
        <taxon>Mycobacteriaceae</taxon>
        <taxon>Mycobacterium</taxon>
        <taxon>Mycobacterium tuberculosis complex</taxon>
    </lineage>
</organism>
<sequence length="402" mass="42055">MDAATTRVGLTDLTFRLLRESFADAVSWVAKNLPARPAVPVLSGVLLTGSDNGLTISGFDYEVSAEAQVGAEIVSPGSVLVSGRLLSDITRALPNKPVGVHVEGNRVALTCGNARFSLPTMPVEDYPTLPTLPEETGLLPAELFAEAISQVAIAAGRDDTLPMLTGIRVEILGETVVLAATDRFRLAVRELKWSASSPDIEAAVLVPAKTLAEAAKAGIGGSDVRLSLGTGPGVGKDGLLGISGNGKRSTTRLLDAEFPKFRQLLPTEHTAVATMDVAELIEAIKLVALVADRGAQVRMEFADGSVRLSAGADDVGRAEEDLVVDYAGEPLTIAFNPTYLTDGLSSLRSERVSFGFTTAGKPALLRPVSGDDRPVAGLNGNGPFPAVSTDYVYLLMPVRLPG</sequence>
<name>DPO3B_MYCBO</name>
<evidence type="ECO:0000250" key="1">
    <source>
        <dbReference type="UniProtKB" id="P0A988"/>
    </source>
</evidence>
<evidence type="ECO:0000305" key="2"/>
<comment type="function">
    <text evidence="1">Confers DNA tethering and processivity to DNA polymerases and other proteins. Acts as a clamp, forming a ring around DNA (a reaction catalyzed by the clamp-loading complex) which diffuses in an ATP-independent manner freely and bidirectionally along dsDNA. Initially characterized for its ability to contact the catalytic subunit of DNA polymerase III (Pol III), a complex, multichain enzyme responsible for most of the replicative synthesis in bacteria; Pol III exhibits 3'-5' exonuclease proofreading activity. The beta chain is required for initiation of replication as well as for processivity of DNA replication.</text>
</comment>
<comment type="subunit">
    <text evidence="1">Forms a ring-shaped head-to-tail homodimer around DNA which binds and tethers DNA polymerases and other proteins to the DNA. The DNA replisome complex has a single clamp-loading complex (3 tau and 1 each of delta, delta', psi and chi subunits) which binds 3 Pol III cores (1 core on the leading strand and 2 on the lagging strand) each with a beta sliding clamp dimer. Additional proteins in the replisome are other copies of gamma, psi and chi, Ssb, DNA helicase and RNA primase.</text>
</comment>
<comment type="subcellular location">
    <subcellularLocation>
        <location evidence="1">Cytoplasm</location>
    </subcellularLocation>
</comment>
<comment type="similarity">
    <text evidence="2">Belongs to the beta sliding clamp family.</text>
</comment>
<protein>
    <recommendedName>
        <fullName>Beta sliding clamp</fullName>
        <shortName>Beta clamp</shortName>
        <shortName>Sliding clamp</shortName>
    </recommendedName>
    <alternativeName>
        <fullName>Beta-clamp processivity factor</fullName>
    </alternativeName>
    <alternativeName>
        <fullName>DNA polymerase III beta sliding clamp subunit</fullName>
    </alternativeName>
    <alternativeName>
        <fullName>DNA polymerase III subunit beta</fullName>
    </alternativeName>
</protein>
<gene>
    <name type="primary">dnaN</name>
    <name type="ordered locus">BQ2027_MB0002</name>
</gene>
<keyword id="KW-0963">Cytoplasm</keyword>
<keyword id="KW-0235">DNA replication</keyword>
<keyword id="KW-0238">DNA-binding</keyword>
<keyword id="KW-0239">DNA-directed DNA polymerase</keyword>
<keyword id="KW-0548">Nucleotidyltransferase</keyword>
<keyword id="KW-1185">Reference proteome</keyword>
<keyword id="KW-0808">Transferase</keyword>